<accession>B1IS26</accession>
<keyword id="KW-0963">Cytoplasm</keyword>
<keyword id="KW-0238">DNA-binding</keyword>
<keyword id="KW-0678">Repressor</keyword>
<keyword id="KW-0804">Transcription</keyword>
<keyword id="KW-0805">Transcription regulation</keyword>
<proteinExistence type="inferred from homology"/>
<sequence>MAQQSPYSAAMAEQRHQEWLRFVDLLKNAYQNDLHLPLLNLMLTPDEREALGTRVRIVEELLRGEMSQRELKNELGAGIATITRGSNSLKAAPVELRQWLEEVLLKSD</sequence>
<reference key="1">
    <citation type="submission" date="2008-02" db="EMBL/GenBank/DDBJ databases">
        <title>Complete sequence of Escherichia coli C str. ATCC 8739.</title>
        <authorList>
            <person name="Copeland A."/>
            <person name="Lucas S."/>
            <person name="Lapidus A."/>
            <person name="Glavina del Rio T."/>
            <person name="Dalin E."/>
            <person name="Tice H."/>
            <person name="Bruce D."/>
            <person name="Goodwin L."/>
            <person name="Pitluck S."/>
            <person name="Kiss H."/>
            <person name="Brettin T."/>
            <person name="Detter J.C."/>
            <person name="Han C."/>
            <person name="Kuske C.R."/>
            <person name="Schmutz J."/>
            <person name="Larimer F."/>
            <person name="Land M."/>
            <person name="Hauser L."/>
            <person name="Kyrpides N."/>
            <person name="Mikhailova N."/>
            <person name="Ingram L."/>
            <person name="Richardson P."/>
        </authorList>
    </citation>
    <scope>NUCLEOTIDE SEQUENCE [LARGE SCALE GENOMIC DNA]</scope>
    <source>
        <strain>ATCC 8739 / DSM 1576 / NBRC 3972 / NCIMB 8545 / WDCM 00012 / Crooks</strain>
    </source>
</reference>
<evidence type="ECO:0000255" key="1">
    <source>
        <dbReference type="HAMAP-Rule" id="MF_00475"/>
    </source>
</evidence>
<gene>
    <name evidence="1" type="primary">trpR</name>
    <name type="ordered locus">EcolC_3663</name>
</gene>
<name>TRPR_ECOLC</name>
<protein>
    <recommendedName>
        <fullName evidence="1">Trp operon repressor</fullName>
    </recommendedName>
</protein>
<comment type="function">
    <text evidence="1">This protein is an aporepressor. When complexed with L-tryptophan it binds the operator region of the trp operon (5'-ACTAGT-'3') and prevents the initiation of transcription. The complex also regulates trp repressor biosynthesis by binding to its regulatory region.</text>
</comment>
<comment type="subunit">
    <text evidence="1">Homodimer.</text>
</comment>
<comment type="subcellular location">
    <subcellularLocation>
        <location evidence="1">Cytoplasm</location>
    </subcellularLocation>
</comment>
<comment type="similarity">
    <text evidence="1">Belongs to the TrpR family.</text>
</comment>
<dbReference type="EMBL" id="CP000946">
    <property type="protein sequence ID" value="ACA79274.1"/>
    <property type="molecule type" value="Genomic_DNA"/>
</dbReference>
<dbReference type="RefSeq" id="WP_000068679.1">
    <property type="nucleotide sequence ID" value="NZ_MTFT01000024.1"/>
</dbReference>
<dbReference type="BMRB" id="B1IS26"/>
<dbReference type="SMR" id="B1IS26"/>
<dbReference type="GeneID" id="93777452"/>
<dbReference type="KEGG" id="ecl:EcolC_3663"/>
<dbReference type="HOGENOM" id="CLU_147939_0_0_6"/>
<dbReference type="GO" id="GO:0005737">
    <property type="term" value="C:cytoplasm"/>
    <property type="evidence" value="ECO:0007669"/>
    <property type="project" value="UniProtKB-SubCell"/>
</dbReference>
<dbReference type="GO" id="GO:0003700">
    <property type="term" value="F:DNA-binding transcription factor activity"/>
    <property type="evidence" value="ECO:0007669"/>
    <property type="project" value="InterPro"/>
</dbReference>
<dbReference type="GO" id="GO:0043565">
    <property type="term" value="F:sequence-specific DNA binding"/>
    <property type="evidence" value="ECO:0007669"/>
    <property type="project" value="InterPro"/>
</dbReference>
<dbReference type="GO" id="GO:0045892">
    <property type="term" value="P:negative regulation of DNA-templated transcription"/>
    <property type="evidence" value="ECO:0007669"/>
    <property type="project" value="UniProtKB-UniRule"/>
</dbReference>
<dbReference type="FunFam" id="1.10.1270.10:FF:000001">
    <property type="entry name" value="Trp operon repressor"/>
    <property type="match status" value="1"/>
</dbReference>
<dbReference type="Gene3D" id="1.10.1270.10">
    <property type="entry name" value="TrpR-like"/>
    <property type="match status" value="1"/>
</dbReference>
<dbReference type="HAMAP" id="MF_00475">
    <property type="entry name" value="Trp_repressor"/>
    <property type="match status" value="1"/>
</dbReference>
<dbReference type="InterPro" id="IPR000831">
    <property type="entry name" value="Trp_repress"/>
</dbReference>
<dbReference type="InterPro" id="IPR013335">
    <property type="entry name" value="Trp_repress_bac"/>
</dbReference>
<dbReference type="InterPro" id="IPR010921">
    <property type="entry name" value="Trp_repressor/repl_initiator"/>
</dbReference>
<dbReference type="InterPro" id="IPR038116">
    <property type="entry name" value="TrpR-like_sf"/>
</dbReference>
<dbReference type="NCBIfam" id="TIGR01321">
    <property type="entry name" value="TrpR"/>
    <property type="match status" value="1"/>
</dbReference>
<dbReference type="PANTHER" id="PTHR38025">
    <property type="entry name" value="TRP OPERON REPRESSOR"/>
    <property type="match status" value="1"/>
</dbReference>
<dbReference type="PANTHER" id="PTHR38025:SF1">
    <property type="entry name" value="TRP OPERON REPRESSOR"/>
    <property type="match status" value="1"/>
</dbReference>
<dbReference type="Pfam" id="PF01371">
    <property type="entry name" value="Trp_repressor"/>
    <property type="match status" value="1"/>
</dbReference>
<dbReference type="PIRSF" id="PIRSF003196">
    <property type="entry name" value="Trp_repressor"/>
    <property type="match status" value="1"/>
</dbReference>
<dbReference type="SUPFAM" id="SSF48295">
    <property type="entry name" value="TrpR-like"/>
    <property type="match status" value="1"/>
</dbReference>
<organism>
    <name type="scientific">Escherichia coli (strain ATCC 8739 / DSM 1576 / NBRC 3972 / NCIMB 8545 / WDCM 00012 / Crooks)</name>
    <dbReference type="NCBI Taxonomy" id="481805"/>
    <lineage>
        <taxon>Bacteria</taxon>
        <taxon>Pseudomonadati</taxon>
        <taxon>Pseudomonadota</taxon>
        <taxon>Gammaproteobacteria</taxon>
        <taxon>Enterobacterales</taxon>
        <taxon>Enterobacteriaceae</taxon>
        <taxon>Escherichia</taxon>
    </lineage>
</organism>
<feature type="chain" id="PRO_1000081253" description="Trp operon repressor">
    <location>
        <begin position="1"/>
        <end position="108"/>
    </location>
</feature>
<feature type="DNA-binding region" evidence="1">
    <location>
        <begin position="68"/>
        <end position="91"/>
    </location>
</feature>